<reference key="1">
    <citation type="journal article" date="1994" name="J. Cell Sci.">
        <title>Cloning and subcellular localization of novel rab proteins reveals polarized and cell type-specific expression.</title>
        <authorList>
            <person name="Luetcke A."/>
            <person name="Parton R.G."/>
            <person name="Murphy C."/>
            <person name="Olkkonen V.M."/>
            <person name="Dupree P."/>
            <person name="Valencia A."/>
            <person name="Simons K."/>
            <person name="Zerial M."/>
        </authorList>
    </citation>
    <scope>NUCLEOTIDE SEQUENCE [MRNA]</scope>
    <scope>FUNCTION</scope>
    <scope>SUBCELLULAR LOCATION</scope>
    <scope>TISSUE SPECIFICITY</scope>
    <source>
        <tissue>Kidney</tissue>
    </source>
</reference>
<reference key="2">
    <citation type="journal article" date="1993" name="Gene">
        <title>Gene cloning and characterization of a GTP-binding Rab protein from mouse pituitary AtT-20 cells.</title>
        <authorList>
            <person name="Yu H."/>
            <person name="Leaf D.S."/>
            <person name="Moore H.P."/>
        </authorList>
    </citation>
    <scope>NUCLEOTIDE SEQUENCE [MRNA]</scope>
    <scope>TISSUE SPECIFICITY</scope>
    <source>
        <strain>LAF1</strain>
        <tissue>Pituitary</tissue>
    </source>
</reference>
<reference key="3">
    <citation type="journal article" date="2005" name="Science">
        <title>The transcriptional landscape of the mammalian genome.</title>
        <authorList>
            <person name="Carninci P."/>
            <person name="Kasukawa T."/>
            <person name="Katayama S."/>
            <person name="Gough J."/>
            <person name="Frith M.C."/>
            <person name="Maeda N."/>
            <person name="Oyama R."/>
            <person name="Ravasi T."/>
            <person name="Lenhard B."/>
            <person name="Wells C."/>
            <person name="Kodzius R."/>
            <person name="Shimokawa K."/>
            <person name="Bajic V.B."/>
            <person name="Brenner S.E."/>
            <person name="Batalov S."/>
            <person name="Forrest A.R."/>
            <person name="Zavolan M."/>
            <person name="Davis M.J."/>
            <person name="Wilming L.G."/>
            <person name="Aidinis V."/>
            <person name="Allen J.E."/>
            <person name="Ambesi-Impiombato A."/>
            <person name="Apweiler R."/>
            <person name="Aturaliya R.N."/>
            <person name="Bailey T.L."/>
            <person name="Bansal M."/>
            <person name="Baxter L."/>
            <person name="Beisel K.W."/>
            <person name="Bersano T."/>
            <person name="Bono H."/>
            <person name="Chalk A.M."/>
            <person name="Chiu K.P."/>
            <person name="Choudhary V."/>
            <person name="Christoffels A."/>
            <person name="Clutterbuck D.R."/>
            <person name="Crowe M.L."/>
            <person name="Dalla E."/>
            <person name="Dalrymple B.P."/>
            <person name="de Bono B."/>
            <person name="Della Gatta G."/>
            <person name="di Bernardo D."/>
            <person name="Down T."/>
            <person name="Engstrom P."/>
            <person name="Fagiolini M."/>
            <person name="Faulkner G."/>
            <person name="Fletcher C.F."/>
            <person name="Fukushima T."/>
            <person name="Furuno M."/>
            <person name="Futaki S."/>
            <person name="Gariboldi M."/>
            <person name="Georgii-Hemming P."/>
            <person name="Gingeras T.R."/>
            <person name="Gojobori T."/>
            <person name="Green R.E."/>
            <person name="Gustincich S."/>
            <person name="Harbers M."/>
            <person name="Hayashi Y."/>
            <person name="Hensch T.K."/>
            <person name="Hirokawa N."/>
            <person name="Hill D."/>
            <person name="Huminiecki L."/>
            <person name="Iacono M."/>
            <person name="Ikeo K."/>
            <person name="Iwama A."/>
            <person name="Ishikawa T."/>
            <person name="Jakt M."/>
            <person name="Kanapin A."/>
            <person name="Katoh M."/>
            <person name="Kawasawa Y."/>
            <person name="Kelso J."/>
            <person name="Kitamura H."/>
            <person name="Kitano H."/>
            <person name="Kollias G."/>
            <person name="Krishnan S.P."/>
            <person name="Kruger A."/>
            <person name="Kummerfeld S.K."/>
            <person name="Kurochkin I.V."/>
            <person name="Lareau L.F."/>
            <person name="Lazarevic D."/>
            <person name="Lipovich L."/>
            <person name="Liu J."/>
            <person name="Liuni S."/>
            <person name="McWilliam S."/>
            <person name="Madan Babu M."/>
            <person name="Madera M."/>
            <person name="Marchionni L."/>
            <person name="Matsuda H."/>
            <person name="Matsuzawa S."/>
            <person name="Miki H."/>
            <person name="Mignone F."/>
            <person name="Miyake S."/>
            <person name="Morris K."/>
            <person name="Mottagui-Tabar S."/>
            <person name="Mulder N."/>
            <person name="Nakano N."/>
            <person name="Nakauchi H."/>
            <person name="Ng P."/>
            <person name="Nilsson R."/>
            <person name="Nishiguchi S."/>
            <person name="Nishikawa S."/>
            <person name="Nori F."/>
            <person name="Ohara O."/>
            <person name="Okazaki Y."/>
            <person name="Orlando V."/>
            <person name="Pang K.C."/>
            <person name="Pavan W.J."/>
            <person name="Pavesi G."/>
            <person name="Pesole G."/>
            <person name="Petrovsky N."/>
            <person name="Piazza S."/>
            <person name="Reed J."/>
            <person name="Reid J.F."/>
            <person name="Ring B.Z."/>
            <person name="Ringwald M."/>
            <person name="Rost B."/>
            <person name="Ruan Y."/>
            <person name="Salzberg S.L."/>
            <person name="Sandelin A."/>
            <person name="Schneider C."/>
            <person name="Schoenbach C."/>
            <person name="Sekiguchi K."/>
            <person name="Semple C.A."/>
            <person name="Seno S."/>
            <person name="Sessa L."/>
            <person name="Sheng Y."/>
            <person name="Shibata Y."/>
            <person name="Shimada H."/>
            <person name="Shimada K."/>
            <person name="Silva D."/>
            <person name="Sinclair B."/>
            <person name="Sperling S."/>
            <person name="Stupka E."/>
            <person name="Sugiura K."/>
            <person name="Sultana R."/>
            <person name="Takenaka Y."/>
            <person name="Taki K."/>
            <person name="Tammoja K."/>
            <person name="Tan S.L."/>
            <person name="Tang S."/>
            <person name="Taylor M.S."/>
            <person name="Tegner J."/>
            <person name="Teichmann S.A."/>
            <person name="Ueda H.R."/>
            <person name="van Nimwegen E."/>
            <person name="Verardo R."/>
            <person name="Wei C.L."/>
            <person name="Yagi K."/>
            <person name="Yamanishi H."/>
            <person name="Zabarovsky E."/>
            <person name="Zhu S."/>
            <person name="Zimmer A."/>
            <person name="Hide W."/>
            <person name="Bult C."/>
            <person name="Grimmond S.M."/>
            <person name="Teasdale R.D."/>
            <person name="Liu E.T."/>
            <person name="Brusic V."/>
            <person name="Quackenbush J."/>
            <person name="Wahlestedt C."/>
            <person name="Mattick J.S."/>
            <person name="Hume D.A."/>
            <person name="Kai C."/>
            <person name="Sasaki D."/>
            <person name="Tomaru Y."/>
            <person name="Fukuda S."/>
            <person name="Kanamori-Katayama M."/>
            <person name="Suzuki M."/>
            <person name="Aoki J."/>
            <person name="Arakawa T."/>
            <person name="Iida J."/>
            <person name="Imamura K."/>
            <person name="Itoh M."/>
            <person name="Kato T."/>
            <person name="Kawaji H."/>
            <person name="Kawagashira N."/>
            <person name="Kawashima T."/>
            <person name="Kojima M."/>
            <person name="Kondo S."/>
            <person name="Konno H."/>
            <person name="Nakano K."/>
            <person name="Ninomiya N."/>
            <person name="Nishio T."/>
            <person name="Okada M."/>
            <person name="Plessy C."/>
            <person name="Shibata K."/>
            <person name="Shiraki T."/>
            <person name="Suzuki S."/>
            <person name="Tagami M."/>
            <person name="Waki K."/>
            <person name="Watahiki A."/>
            <person name="Okamura-Oho Y."/>
            <person name="Suzuki H."/>
            <person name="Kawai J."/>
            <person name="Hayashizaki Y."/>
        </authorList>
    </citation>
    <scope>NUCLEOTIDE SEQUENCE [LARGE SCALE MRNA]</scope>
    <source>
        <strain>C57BL/6J</strain>
        <strain>DBA/2J</strain>
        <strain>NOD</strain>
        <tissue>Corpora quadrigemina</tissue>
        <tissue>Head</tissue>
        <tissue>Spleen</tissue>
    </source>
</reference>
<reference key="4">
    <citation type="journal article" date="2004" name="Genome Res.">
        <title>The status, quality, and expansion of the NIH full-length cDNA project: the Mammalian Gene Collection (MGC).</title>
        <authorList>
            <consortium name="The MGC Project Team"/>
        </authorList>
    </citation>
    <scope>NUCLEOTIDE SEQUENCE [LARGE SCALE MRNA]</scope>
    <source>
        <strain>C57BL/6J</strain>
        <tissue>Brain</tissue>
    </source>
</reference>
<reference key="5">
    <citation type="journal article" date="1992" name="Gene">
        <title>The complexity of the Rab and Rho GTP-binding protein subfamilies revealed by a PCR cloning approach.</title>
        <authorList>
            <person name="Chavrier P."/>
            <person name="Simons K."/>
            <person name="Zerial M."/>
        </authorList>
    </citation>
    <scope>NUCLEOTIDE SEQUENCE [MRNA] OF 1-68</scope>
    <source>
        <tissue>Kidney</tissue>
    </source>
</reference>
<reference key="6">
    <citation type="journal article" date="2010" name="Cell">
        <title>A tissue-specific atlas of mouse protein phosphorylation and expression.</title>
        <authorList>
            <person name="Huttlin E.L."/>
            <person name="Jedrychowski M.P."/>
            <person name="Elias J.E."/>
            <person name="Goswami T."/>
            <person name="Rad R."/>
            <person name="Beausoleil S.A."/>
            <person name="Villen J."/>
            <person name="Haas W."/>
            <person name="Sowa M.E."/>
            <person name="Gygi S.P."/>
        </authorList>
    </citation>
    <scope>PHOSPHORYLATION [LARGE SCALE ANALYSIS] AT SER-144</scope>
    <scope>IDENTIFICATION BY MASS SPECTROMETRY [LARGE SCALE ANALYSIS]</scope>
    <source>
        <tissue>Brain</tissue>
        <tissue>Brown adipose tissue</tissue>
        <tissue>Heart</tissue>
        <tissue>Kidney</tissue>
        <tissue>Liver</tissue>
        <tissue>Lung</tissue>
        <tissue>Pancreas</tissue>
        <tissue>Spleen</tissue>
        <tissue>Testis</tissue>
    </source>
</reference>
<reference key="7">
    <citation type="journal article" date="2015" name="Open Biol.">
        <title>Warburg Micro syndrome is caused by RAB18 deficiency or dysregulation.</title>
        <authorList>
            <person name="Handley M.T."/>
            <person name="Carpanini S.M."/>
            <person name="Mali G.R."/>
            <person name="Sidjanin D.J."/>
            <person name="Aligianis I.A."/>
            <person name="Jackson I.J."/>
            <person name="FitzPatrick D.R."/>
        </authorList>
    </citation>
    <scope>ACTIVITY REGULATION</scope>
</reference>
<proteinExistence type="evidence at protein level"/>
<comment type="function">
    <text evidence="3 6">The small GTPases Rab are key regulators of intracellular membrane trafficking, from the formation of transport vesicles to their fusion with membranes (By similarity). Rabs cycle between an inactive GDP-bound form and an active GTP-bound form that is able to recruit to membranes different sets of downstream effectors directly responsible for vesicle formation, movement, tethering and fusion (By similarity). RAB18 is required for the localization of ZFYVE1 to lipid droplets and for its function in mediating the formation of endoplasmic reticulum-lipid droplets (ER-LD) contacts (By similarity). Also required for maintaining endoplasmic reticulum structure (By similarity). Plays a role in apical endocytosis/recycling (PubMed:7706395). Plays a key role in eye and brain development and neurodegeneration (By similarity).</text>
</comment>
<comment type="catalytic activity">
    <reaction evidence="3">
        <text>GTP + H2O = GDP + phosphate + H(+)</text>
        <dbReference type="Rhea" id="RHEA:19669"/>
        <dbReference type="ChEBI" id="CHEBI:15377"/>
        <dbReference type="ChEBI" id="CHEBI:15378"/>
        <dbReference type="ChEBI" id="CHEBI:37565"/>
        <dbReference type="ChEBI" id="CHEBI:43474"/>
        <dbReference type="ChEBI" id="CHEBI:58189"/>
        <dbReference type="EC" id="3.6.5.2"/>
    </reaction>
    <physiologicalReaction direction="left-to-right" evidence="3">
        <dbReference type="Rhea" id="RHEA:19670"/>
    </physiologicalReaction>
</comment>
<comment type="cofactor">
    <cofactor evidence="3">
        <name>Mg(2+)</name>
        <dbReference type="ChEBI" id="CHEBI:18420"/>
    </cofactor>
</comment>
<comment type="activity regulation">
    <text evidence="3 5">Regulated by guanine nucleotide exchange factor (GEF) RAB3GAP1-RAB3GAP2 complex at the cis-Golgi membrane which promotes the exchange of bound GDP for free GTP (PubMed:26063829). Regulated by GTPase activating protein (GAP) TBC1D20 at the ER membrane which increases the GTP hydrolysis activity (PubMed:26063829). Inhibited by GDP dissociation inhibitors (GDIs) which prevent Rab-GDP dissociation (By similarity).</text>
</comment>
<comment type="subunit">
    <text evidence="3">Interacts (in GTP-bound form) with ZFYVE1 (By similarity). Interacts with ZW10 and this interaction is enhanced in the presence of ZFYVE1 (By similarity). Interacts with BSCL2 (By similarity).</text>
</comment>
<comment type="subcellular location">
    <subcellularLocation>
        <location evidence="3">Endoplasmic reticulum membrane</location>
    </subcellularLocation>
    <subcellularLocation>
        <location evidence="3">Golgi apparatus</location>
        <location evidence="3">cis-Golgi network membrane</location>
    </subcellularLocation>
    <subcellularLocation>
        <location evidence="3">Lipid droplet</location>
    </subcellularLocation>
    <subcellularLocation>
        <location evidence="6">Apical cell membrane</location>
    </subcellularLocation>
</comment>
<comment type="tissue specificity">
    <text evidence="6 7">Expression is high in the brain, moderate in the pituitary, and low in the liver. Detected in all tissues. Highly enriched on apical endocytic structures in polarized epithelial cells of kidney proximal tubules. Detected on both the apical and basolateral domains in epithelial cells of the intestine.</text>
</comment>
<comment type="domain">
    <text evidence="2">Switch 1, switch 2 and the interswitch regions are characteristic of Rab GTPases and mediate the interactions with Rab downstream effectors. The switch regions undergo conformational changes upon nucleotide binding which drive interaction with specific sets of effector proteins, with most effectors only binding to GTP-bound Rab.</text>
</comment>
<comment type="similarity">
    <text evidence="8">Belongs to the small GTPase superfamily. Rab family.</text>
</comment>
<organism>
    <name type="scientific">Mus musculus</name>
    <name type="common">Mouse</name>
    <dbReference type="NCBI Taxonomy" id="10090"/>
    <lineage>
        <taxon>Eukaryota</taxon>
        <taxon>Metazoa</taxon>
        <taxon>Chordata</taxon>
        <taxon>Craniata</taxon>
        <taxon>Vertebrata</taxon>
        <taxon>Euteleostomi</taxon>
        <taxon>Mammalia</taxon>
        <taxon>Eutheria</taxon>
        <taxon>Euarchontoglires</taxon>
        <taxon>Glires</taxon>
        <taxon>Rodentia</taxon>
        <taxon>Myomorpha</taxon>
        <taxon>Muroidea</taxon>
        <taxon>Muridae</taxon>
        <taxon>Murinae</taxon>
        <taxon>Mus</taxon>
        <taxon>Mus</taxon>
    </lineage>
</organism>
<protein>
    <recommendedName>
        <fullName>Ras-related protein Rab-18</fullName>
        <ecNumber evidence="3">3.6.5.2</ecNumber>
    </recommendedName>
</protein>
<gene>
    <name evidence="9" type="primary">Rab18</name>
</gene>
<evidence type="ECO:0000250" key="1"/>
<evidence type="ECO:0000250" key="2">
    <source>
        <dbReference type="UniProtKB" id="P62820"/>
    </source>
</evidence>
<evidence type="ECO:0000250" key="3">
    <source>
        <dbReference type="UniProtKB" id="Q9NP72"/>
    </source>
</evidence>
<evidence type="ECO:0000255" key="4"/>
<evidence type="ECO:0000269" key="5">
    <source>
    </source>
</evidence>
<evidence type="ECO:0000269" key="6">
    <source>
    </source>
</evidence>
<evidence type="ECO:0000269" key="7">
    <source>
    </source>
</evidence>
<evidence type="ECO:0000305" key="8"/>
<evidence type="ECO:0000312" key="9">
    <source>
        <dbReference type="MGI" id="MGI:102790"/>
    </source>
</evidence>
<evidence type="ECO:0007744" key="10">
    <source>
    </source>
</evidence>
<name>RAB18_MOUSE</name>
<accession>P35293</accession>
<accession>Q543V0</accession>
<keyword id="KW-0007">Acetylation</keyword>
<keyword id="KW-1003">Cell membrane</keyword>
<keyword id="KW-0217">Developmental protein</keyword>
<keyword id="KW-0256">Endoplasmic reticulum</keyword>
<keyword id="KW-0333">Golgi apparatus</keyword>
<keyword id="KW-0342">GTP-binding</keyword>
<keyword id="KW-0378">Hydrolase</keyword>
<keyword id="KW-0551">Lipid droplet</keyword>
<keyword id="KW-0449">Lipoprotein</keyword>
<keyword id="KW-0460">Magnesium</keyword>
<keyword id="KW-0472">Membrane</keyword>
<keyword id="KW-0479">Metal-binding</keyword>
<keyword id="KW-0488">Methylation</keyword>
<keyword id="KW-0547">Nucleotide-binding</keyword>
<keyword id="KW-0564">Palmitate</keyword>
<keyword id="KW-0597">Phosphoprotein</keyword>
<keyword id="KW-0636">Prenylation</keyword>
<keyword id="KW-0653">Protein transport</keyword>
<keyword id="KW-1185">Reference proteome</keyword>
<keyword id="KW-0813">Transport</keyword>
<dbReference type="EC" id="3.6.5.2" evidence="3"/>
<dbReference type="EMBL" id="X80333">
    <property type="protein sequence ID" value="CAA56583.1"/>
    <property type="molecule type" value="mRNA"/>
</dbReference>
<dbReference type="EMBL" id="L04966">
    <property type="protein sequence ID" value="AAC37632.1"/>
    <property type="molecule type" value="mRNA"/>
</dbReference>
<dbReference type="EMBL" id="AK045514">
    <property type="protein sequence ID" value="BAC32402.1"/>
    <property type="molecule type" value="mRNA"/>
</dbReference>
<dbReference type="EMBL" id="AK140901">
    <property type="protein sequence ID" value="BAE24512.1"/>
    <property type="molecule type" value="mRNA"/>
</dbReference>
<dbReference type="EMBL" id="AK143673">
    <property type="protein sequence ID" value="BAE25489.1"/>
    <property type="molecule type" value="mRNA"/>
</dbReference>
<dbReference type="EMBL" id="AK146177">
    <property type="protein sequence ID" value="BAE26955.1"/>
    <property type="molecule type" value="mRNA"/>
</dbReference>
<dbReference type="EMBL" id="AK146397">
    <property type="protein sequence ID" value="BAE27140.1"/>
    <property type="molecule type" value="mRNA"/>
</dbReference>
<dbReference type="EMBL" id="AK154920">
    <property type="protein sequence ID" value="BAE32926.1"/>
    <property type="molecule type" value="mRNA"/>
</dbReference>
<dbReference type="EMBL" id="BC056351">
    <property type="protein sequence ID" value="AAH56351.1"/>
    <property type="molecule type" value="mRNA"/>
</dbReference>
<dbReference type="EMBL" id="M79308">
    <property type="protein sequence ID" value="AAK14832.1"/>
    <property type="molecule type" value="mRNA"/>
</dbReference>
<dbReference type="CCDS" id="CCDS29044.1"/>
<dbReference type="PIR" id="JN0874">
    <property type="entry name" value="JN0874"/>
</dbReference>
<dbReference type="RefSeq" id="NP_851415.1">
    <property type="nucleotide sequence ID" value="NM_181070.6"/>
</dbReference>
<dbReference type="SMR" id="P35293"/>
<dbReference type="BioGRID" id="202536">
    <property type="interactions" value="582"/>
</dbReference>
<dbReference type="FunCoup" id="P35293">
    <property type="interactions" value="3527"/>
</dbReference>
<dbReference type="IntAct" id="P35293">
    <property type="interactions" value="11"/>
</dbReference>
<dbReference type="MINT" id="P35293"/>
<dbReference type="STRING" id="10090.ENSMUSP00000157011"/>
<dbReference type="GlyGen" id="P35293">
    <property type="glycosylation" value="1 site, 1 O-linked glycan (1 site)"/>
</dbReference>
<dbReference type="iPTMnet" id="P35293"/>
<dbReference type="PhosphoSitePlus" id="P35293"/>
<dbReference type="SwissPalm" id="P35293"/>
<dbReference type="jPOST" id="P35293"/>
<dbReference type="PaxDb" id="10090-ENSMUSP00000095285"/>
<dbReference type="PeptideAtlas" id="P35293"/>
<dbReference type="ProteomicsDB" id="300289"/>
<dbReference type="Pumba" id="P35293"/>
<dbReference type="Antibodypedia" id="12749">
    <property type="antibodies" value="195 antibodies from 28 providers"/>
</dbReference>
<dbReference type="DNASU" id="19330"/>
<dbReference type="Ensembl" id="ENSMUST00000234810.2">
    <property type="protein sequence ID" value="ENSMUSP00000157011.2"/>
    <property type="gene ID" value="ENSMUSG00000073639.7"/>
</dbReference>
<dbReference type="GeneID" id="19330"/>
<dbReference type="KEGG" id="mmu:19330"/>
<dbReference type="UCSC" id="uc008dzo.2">
    <property type="organism name" value="mouse"/>
</dbReference>
<dbReference type="AGR" id="MGI:102790"/>
<dbReference type="CTD" id="22931"/>
<dbReference type="MGI" id="MGI:102790">
    <property type="gene designation" value="Rab18"/>
</dbReference>
<dbReference type="VEuPathDB" id="HostDB:ENSMUSG00000073639"/>
<dbReference type="eggNOG" id="KOG0080">
    <property type="taxonomic scope" value="Eukaryota"/>
</dbReference>
<dbReference type="GeneTree" id="ENSGT00940000157325"/>
<dbReference type="HOGENOM" id="CLU_041217_10_7_1"/>
<dbReference type="InParanoid" id="P35293"/>
<dbReference type="OrthoDB" id="9989112at2759"/>
<dbReference type="PhylomeDB" id="P35293"/>
<dbReference type="TreeFam" id="TF313448"/>
<dbReference type="Reactome" id="R-MMU-6798695">
    <property type="pathway name" value="Neutrophil degranulation"/>
</dbReference>
<dbReference type="Reactome" id="R-MMU-6811436">
    <property type="pathway name" value="COPI-independent Golgi-to-ER retrograde traffic"/>
</dbReference>
<dbReference type="Reactome" id="R-MMU-8873719">
    <property type="pathway name" value="RAB geranylgeranylation"/>
</dbReference>
<dbReference type="Reactome" id="R-MMU-8876198">
    <property type="pathway name" value="RAB GEFs exchange GTP for GDP on RABs"/>
</dbReference>
<dbReference type="BioGRID-ORCS" id="19330">
    <property type="hits" value="3 hits in 78 CRISPR screens"/>
</dbReference>
<dbReference type="ChiTaRS" id="Rab18">
    <property type="organism name" value="mouse"/>
</dbReference>
<dbReference type="PRO" id="PR:P35293"/>
<dbReference type="Proteomes" id="UP000000589">
    <property type="component" value="Chromosome 18"/>
</dbReference>
<dbReference type="RNAct" id="P35293">
    <property type="molecule type" value="protein"/>
</dbReference>
<dbReference type="Bgee" id="ENSMUSG00000073639">
    <property type="expression patterns" value="Expressed in embryonic brain and 268 other cell types or tissues"/>
</dbReference>
<dbReference type="ExpressionAtlas" id="P35293">
    <property type="expression patterns" value="baseline and differential"/>
</dbReference>
<dbReference type="GO" id="GO:0016324">
    <property type="term" value="C:apical plasma membrane"/>
    <property type="evidence" value="ECO:0007669"/>
    <property type="project" value="UniProtKB-SubCell"/>
</dbReference>
<dbReference type="GO" id="GO:0033106">
    <property type="term" value="C:cis-Golgi network membrane"/>
    <property type="evidence" value="ECO:0000250"/>
    <property type="project" value="UniProtKB"/>
</dbReference>
<dbReference type="GO" id="GO:0005789">
    <property type="term" value="C:endoplasmic reticulum membrane"/>
    <property type="evidence" value="ECO:0000250"/>
    <property type="project" value="UniProtKB"/>
</dbReference>
<dbReference type="GO" id="GO:0005811">
    <property type="term" value="C:lipid droplet"/>
    <property type="evidence" value="ECO:0000250"/>
    <property type="project" value="UniProtKB"/>
</dbReference>
<dbReference type="GO" id="GO:0019003">
    <property type="term" value="F:GDP binding"/>
    <property type="evidence" value="ECO:0000250"/>
    <property type="project" value="UniProtKB"/>
</dbReference>
<dbReference type="GO" id="GO:0005525">
    <property type="term" value="F:GTP binding"/>
    <property type="evidence" value="ECO:0007669"/>
    <property type="project" value="UniProtKB-KW"/>
</dbReference>
<dbReference type="GO" id="GO:0003924">
    <property type="term" value="F:GTPase activity"/>
    <property type="evidence" value="ECO:0000250"/>
    <property type="project" value="UniProtKB"/>
</dbReference>
<dbReference type="GO" id="GO:0007420">
    <property type="term" value="P:brain development"/>
    <property type="evidence" value="ECO:0000250"/>
    <property type="project" value="UniProtKB"/>
</dbReference>
<dbReference type="GO" id="GO:0001654">
    <property type="term" value="P:eye development"/>
    <property type="evidence" value="ECO:0000250"/>
    <property type="project" value="UniProtKB"/>
</dbReference>
<dbReference type="GO" id="GO:0051170">
    <property type="term" value="P:import into nucleus"/>
    <property type="evidence" value="ECO:0000315"/>
    <property type="project" value="UniProtKB"/>
</dbReference>
<dbReference type="GO" id="GO:0034389">
    <property type="term" value="P:lipid droplet organization"/>
    <property type="evidence" value="ECO:0000266"/>
    <property type="project" value="MGI"/>
</dbReference>
<dbReference type="GO" id="GO:0015031">
    <property type="term" value="P:protein transport"/>
    <property type="evidence" value="ECO:0007669"/>
    <property type="project" value="UniProtKB-KW"/>
</dbReference>
<dbReference type="CDD" id="cd01863">
    <property type="entry name" value="Rab18"/>
    <property type="match status" value="1"/>
</dbReference>
<dbReference type="FunFam" id="3.40.50.300:FF:000430">
    <property type="entry name" value="Probable Ras-related protein Rab-18"/>
    <property type="match status" value="1"/>
</dbReference>
<dbReference type="Gene3D" id="3.40.50.300">
    <property type="entry name" value="P-loop containing nucleotide triphosphate hydrolases"/>
    <property type="match status" value="1"/>
</dbReference>
<dbReference type="InterPro" id="IPR027417">
    <property type="entry name" value="P-loop_NTPase"/>
</dbReference>
<dbReference type="InterPro" id="IPR050227">
    <property type="entry name" value="Rab"/>
</dbReference>
<dbReference type="InterPro" id="IPR025662">
    <property type="entry name" value="Sigma_54_int_dom_ATP-bd_1"/>
</dbReference>
<dbReference type="InterPro" id="IPR005225">
    <property type="entry name" value="Small_GTP-bd"/>
</dbReference>
<dbReference type="InterPro" id="IPR001806">
    <property type="entry name" value="Small_GTPase"/>
</dbReference>
<dbReference type="NCBIfam" id="TIGR00231">
    <property type="entry name" value="small_GTP"/>
    <property type="match status" value="1"/>
</dbReference>
<dbReference type="PANTHER" id="PTHR47977">
    <property type="entry name" value="RAS-RELATED PROTEIN RAB"/>
    <property type="match status" value="1"/>
</dbReference>
<dbReference type="Pfam" id="PF00071">
    <property type="entry name" value="Ras"/>
    <property type="match status" value="1"/>
</dbReference>
<dbReference type="PRINTS" id="PR00449">
    <property type="entry name" value="RASTRNSFRMNG"/>
</dbReference>
<dbReference type="SMART" id="SM00177">
    <property type="entry name" value="ARF"/>
    <property type="match status" value="1"/>
</dbReference>
<dbReference type="SMART" id="SM00175">
    <property type="entry name" value="RAB"/>
    <property type="match status" value="1"/>
</dbReference>
<dbReference type="SMART" id="SM00176">
    <property type="entry name" value="RAN"/>
    <property type="match status" value="1"/>
</dbReference>
<dbReference type="SMART" id="SM00173">
    <property type="entry name" value="RAS"/>
    <property type="match status" value="1"/>
</dbReference>
<dbReference type="SMART" id="SM00174">
    <property type="entry name" value="RHO"/>
    <property type="match status" value="1"/>
</dbReference>
<dbReference type="SUPFAM" id="SSF52540">
    <property type="entry name" value="P-loop containing nucleoside triphosphate hydrolases"/>
    <property type="match status" value="1"/>
</dbReference>
<dbReference type="PROSITE" id="PS51419">
    <property type="entry name" value="RAB"/>
    <property type="match status" value="1"/>
</dbReference>
<feature type="chain" id="PRO_0000121194" description="Ras-related protein Rab-18">
    <location>
        <begin position="1"/>
        <end position="203"/>
    </location>
</feature>
<feature type="propeptide" id="PRO_0000370762" description="Removed in mature form" evidence="4">
    <location>
        <begin position="204"/>
        <end position="206"/>
    </location>
</feature>
<feature type="short sequence motif" description="Switch 1" evidence="2">
    <location>
        <begin position="31"/>
        <end position="45"/>
    </location>
</feature>
<feature type="short sequence motif" description="Switch 2" evidence="2">
    <location>
        <begin position="63"/>
        <end position="80"/>
    </location>
</feature>
<feature type="binding site" evidence="3">
    <location>
        <position position="17"/>
    </location>
    <ligand>
        <name>GTP</name>
        <dbReference type="ChEBI" id="CHEBI:37565"/>
    </ligand>
</feature>
<feature type="binding site" evidence="3">
    <location>
        <position position="20"/>
    </location>
    <ligand>
        <name>GTP</name>
        <dbReference type="ChEBI" id="CHEBI:37565"/>
    </ligand>
</feature>
<feature type="binding site" evidence="3">
    <location>
        <position position="21"/>
    </location>
    <ligand>
        <name>GTP</name>
        <dbReference type="ChEBI" id="CHEBI:37565"/>
    </ligand>
</feature>
<feature type="binding site" evidence="3">
    <location>
        <position position="22"/>
    </location>
    <ligand>
        <name>GTP</name>
        <dbReference type="ChEBI" id="CHEBI:37565"/>
    </ligand>
</feature>
<feature type="binding site" evidence="3">
    <location>
        <position position="22"/>
    </location>
    <ligand>
        <name>Mg(2+)</name>
        <dbReference type="ChEBI" id="CHEBI:18420"/>
    </ligand>
</feature>
<feature type="binding site" evidence="3">
    <location>
        <position position="23"/>
    </location>
    <ligand>
        <name>GTP</name>
        <dbReference type="ChEBI" id="CHEBI:37565"/>
    </ligand>
</feature>
<feature type="binding site" evidence="3">
    <location>
        <position position="34"/>
    </location>
    <ligand>
        <name>GTP</name>
        <dbReference type="ChEBI" id="CHEBI:37565"/>
    </ligand>
</feature>
<feature type="binding site" evidence="3">
    <location>
        <position position="35"/>
    </location>
    <ligand>
        <name>GTP</name>
        <dbReference type="ChEBI" id="CHEBI:37565"/>
    </ligand>
</feature>
<feature type="binding site" evidence="3">
    <location>
        <position position="40"/>
    </location>
    <ligand>
        <name>GTP</name>
        <dbReference type="ChEBI" id="CHEBI:37565"/>
    </ligand>
</feature>
<feature type="binding site" evidence="3">
    <location>
        <position position="40"/>
    </location>
    <ligand>
        <name>Mg(2+)</name>
        <dbReference type="ChEBI" id="CHEBI:18420"/>
    </ligand>
</feature>
<feature type="binding site" evidence="3">
    <location>
        <position position="66"/>
    </location>
    <ligand>
        <name>GTP</name>
        <dbReference type="ChEBI" id="CHEBI:37565"/>
    </ligand>
</feature>
<feature type="binding site" evidence="3">
    <location>
        <position position="123"/>
    </location>
    <ligand>
        <name>GTP</name>
        <dbReference type="ChEBI" id="CHEBI:37565"/>
    </ligand>
</feature>
<feature type="binding site" evidence="3">
    <location>
        <position position="125"/>
    </location>
    <ligand>
        <name>GTP</name>
        <dbReference type="ChEBI" id="CHEBI:37565"/>
    </ligand>
</feature>
<feature type="binding site" evidence="3">
    <location>
        <position position="152"/>
    </location>
    <ligand>
        <name>GTP</name>
        <dbReference type="ChEBI" id="CHEBI:37565"/>
    </ligand>
</feature>
<feature type="modified residue" description="N-acetylmethionine" evidence="3">
    <location>
        <position position="1"/>
    </location>
</feature>
<feature type="modified residue" description="Phosphoserine" evidence="10">
    <location>
        <position position="144"/>
    </location>
</feature>
<feature type="modified residue" description="Cysteine methyl ester" evidence="4">
    <location>
        <position position="203"/>
    </location>
</feature>
<feature type="lipid moiety-binding region" description="S-palmitoyl cysteine" evidence="4">
    <location>
        <position position="199"/>
    </location>
</feature>
<feature type="lipid moiety-binding region" description="S-geranylgeranyl cysteine" evidence="1">
    <location>
        <position position="203"/>
    </location>
</feature>
<sequence>MDEDVLTTLKILIIGESGVGKSSLLLRFTDDTFDPELAATIGVDFKVKTISVDGNKAKLAIWDTAGQERFRTLTPSYYRGAQGVILVYDVTRRDTFVKLDNWLNELETYCTRNDIVNMLVGNKIDKENREVDRNEGLKFARKHSMLFIEASAKTCDGVQCAFEELVEKIIQTPGLWESENQNKGVKLSHREESRGGGACGGYCSVL</sequence>